<name>SSG1_ORYSA</name>
<feature type="transit peptide" description="Chloroplast" evidence="2">
    <location>
        <begin position="1"/>
        <end position="76"/>
    </location>
</feature>
<feature type="chain" id="PRO_0000295648" description="Granule-bound starch synthase 1, chloroplastic/amyloplastic">
    <location>
        <begin position="77"/>
        <end position="606"/>
    </location>
</feature>
<feature type="region of interest" description="Disordered" evidence="3">
    <location>
        <begin position="29"/>
        <end position="67"/>
    </location>
</feature>
<feature type="compositionally biased region" description="Polar residues" evidence="3">
    <location>
        <begin position="46"/>
        <end position="66"/>
    </location>
</feature>
<feature type="binding site" evidence="1">
    <location>
        <position position="97"/>
    </location>
    <ligand>
        <name>ADP-alpha-D-glucose</name>
        <dbReference type="ChEBI" id="CHEBI:57498"/>
    </ligand>
</feature>
<sequence length="606" mass="66323">MSALTTSQLATSATGFGIADRSAPSSLLRHGFQGLKPRSPAGGDASSLSVTTSARATPKQQRSVQRGSRRFPSVVVYATGAGMNVVFVGAEMAPWSKTGGLGDVLGGLPPAMAANGHRVMVISPRYDQYKDAWDTSVVAEIKVADRYERVRFFHCYKRGVDRVFIDHPSFLEKVWGKTGEKIYGPDTGVDYKDNQMRFSLLCQEAPRILNLNNNPYFKGTYGEDVVFVCNDWHTGPLPSYLKNNYQPNGIYRNAKVAFCIHNISYQGRFAFEDYPELNLSERFKSSFDFIDGYDTPVEGRKINWMKAGILESDRVLTVSPYYAEELISGIARGCELDNIMRLTGITGIVNGMDVSEWDPSKDKYITTKYDATTAIEAKALNKEALQAEAGLPVDRKVPLIAFIGRLEEQKGPDVMAAAIPELMQENVQIVLLGTGKKKFEKLLKSMEEKYPGKVRAVVKFNAPLAHLIMAGADVLAVPSRFEPCGLIQLQGMRYGTPCACASTGGLVDTVIEGKTGFHMGRLSVDCKVVEPSDVQKVATTLKRAIKIVGTPAYNEMVRNCMNQDLSWKGPAKNWENVLLGLGVAGSEPGVEGEEIAPLAKENVAAP</sequence>
<accession>P0C585</accession>
<accession>P19395</accession>
<accession>Q1ZZT5</accession>
<accession>Q43012</accession>
<accession>Q43013</accession>
<accession>Q71F57</accession>
<accession>Q8GZD6</accession>
<accession>Q8S9C4</accession>
<accession>Q94LY7</accession>
<accession>Q9S7R1</accession>
<accession>Q9S7U4</accession>
<proteinExistence type="inferred from homology"/>
<organism>
    <name type="scientific">Oryza sativa</name>
    <name type="common">Rice</name>
    <dbReference type="NCBI Taxonomy" id="4530"/>
    <lineage>
        <taxon>Eukaryota</taxon>
        <taxon>Viridiplantae</taxon>
        <taxon>Streptophyta</taxon>
        <taxon>Embryophyta</taxon>
        <taxon>Tracheophyta</taxon>
        <taxon>Spermatophyta</taxon>
        <taxon>Magnoliopsida</taxon>
        <taxon>Liliopsida</taxon>
        <taxon>Poales</taxon>
        <taxon>Poaceae</taxon>
        <taxon>BOP clade</taxon>
        <taxon>Oryzoideae</taxon>
        <taxon>Oryzeae</taxon>
        <taxon>Oryzinae</taxon>
        <taxon>Oryza</taxon>
    </lineage>
</organism>
<gene>
    <name type="primary">WAXY</name>
    <name type="synonym">WX</name>
    <name type="synonym">WX-B</name>
</gene>
<evidence type="ECO:0000250" key="1"/>
<evidence type="ECO:0000255" key="2"/>
<evidence type="ECO:0000256" key="3">
    <source>
        <dbReference type="SAM" id="MobiDB-lite"/>
    </source>
</evidence>
<evidence type="ECO:0000305" key="4"/>
<protein>
    <recommendedName>
        <fullName>Granule-bound starch synthase 1, chloroplastic/amyloplastic</fullName>
        <ecNumber>2.4.1.242</ecNumber>
    </recommendedName>
    <alternativeName>
        <fullName>Granule-bound starch synthase I</fullName>
        <shortName>GBSS-I</shortName>
    </alternativeName>
</protein>
<keyword id="KW-0035">Amyloplast</keyword>
<keyword id="KW-0150">Chloroplast</keyword>
<keyword id="KW-0328">Glycosyltransferase</keyword>
<keyword id="KW-0934">Plastid</keyword>
<keyword id="KW-0750">Starch biosynthesis</keyword>
<keyword id="KW-0808">Transferase</keyword>
<keyword id="KW-0809">Transit peptide</keyword>
<dbReference type="EC" id="2.4.1.242"/>
<dbReference type="EMBL" id="X64108">
    <property type="protein sequence ID" value="CAA45472.1"/>
    <property type="molecule type" value="Genomic_DNA"/>
</dbReference>
<dbReference type="SMR" id="P0C585"/>
<dbReference type="Allergome" id="11008">
    <property type="allergen name" value="Ory s GBSS_I"/>
</dbReference>
<dbReference type="BRENDA" id="2.4.1.242">
    <property type="organism ID" value="4460"/>
</dbReference>
<dbReference type="UniPathway" id="UPA00152"/>
<dbReference type="ExpressionAtlas" id="P0C585">
    <property type="expression patterns" value="baseline and differential"/>
</dbReference>
<dbReference type="GO" id="GO:0009501">
    <property type="term" value="C:amyloplast"/>
    <property type="evidence" value="ECO:0007669"/>
    <property type="project" value="UniProtKB-SubCell"/>
</dbReference>
<dbReference type="GO" id="GO:0009507">
    <property type="term" value="C:chloroplast"/>
    <property type="evidence" value="ECO:0007669"/>
    <property type="project" value="UniProtKB-SubCell"/>
</dbReference>
<dbReference type="GO" id="GO:0004373">
    <property type="term" value="F:alpha-1,4-glucan glucosyltransferase (UDP-glucose donor) activity"/>
    <property type="evidence" value="ECO:0007669"/>
    <property type="project" value="InterPro"/>
</dbReference>
<dbReference type="GO" id="GO:0019252">
    <property type="term" value="P:starch biosynthetic process"/>
    <property type="evidence" value="ECO:0007669"/>
    <property type="project" value="UniProtKB-UniPathway"/>
</dbReference>
<dbReference type="CDD" id="cd03791">
    <property type="entry name" value="GT5_Glycogen_synthase_DULL1-like"/>
    <property type="match status" value="1"/>
</dbReference>
<dbReference type="FunFam" id="3.40.50.2000:FF:000073">
    <property type="entry name" value="Starch synthase, chloroplastic/amyloplastic"/>
    <property type="match status" value="1"/>
</dbReference>
<dbReference type="FunFam" id="3.40.50.2000:FF:000090">
    <property type="entry name" value="Starch synthase, chloroplastic/amyloplastic"/>
    <property type="match status" value="1"/>
</dbReference>
<dbReference type="Gene3D" id="3.40.50.2000">
    <property type="entry name" value="Glycogen Phosphorylase B"/>
    <property type="match status" value="2"/>
</dbReference>
<dbReference type="HAMAP" id="MF_00484">
    <property type="entry name" value="Glycogen_synth"/>
    <property type="match status" value="1"/>
</dbReference>
<dbReference type="InterPro" id="IPR001296">
    <property type="entry name" value="Glyco_trans_1"/>
</dbReference>
<dbReference type="InterPro" id="IPR011835">
    <property type="entry name" value="GS/SS"/>
</dbReference>
<dbReference type="InterPro" id="IPR013534">
    <property type="entry name" value="Starch_synth_cat_dom"/>
</dbReference>
<dbReference type="NCBIfam" id="TIGR02095">
    <property type="entry name" value="glgA"/>
    <property type="match status" value="1"/>
</dbReference>
<dbReference type="PANTHER" id="PTHR45825">
    <property type="entry name" value="GRANULE-BOUND STARCH SYNTHASE 1, CHLOROPLASTIC/AMYLOPLASTIC"/>
    <property type="match status" value="1"/>
</dbReference>
<dbReference type="PANTHER" id="PTHR45825:SF3">
    <property type="entry name" value="GRANULE-BOUND STARCH SYNTHASE 1, CHLOROPLASTIC_AMYLOPLASTIC"/>
    <property type="match status" value="1"/>
</dbReference>
<dbReference type="Pfam" id="PF08323">
    <property type="entry name" value="Glyco_transf_5"/>
    <property type="match status" value="1"/>
</dbReference>
<dbReference type="Pfam" id="PF00534">
    <property type="entry name" value="Glycos_transf_1"/>
    <property type="match status" value="1"/>
</dbReference>
<dbReference type="SUPFAM" id="SSF53756">
    <property type="entry name" value="UDP-Glycosyltransferase/glycogen phosphorylase"/>
    <property type="match status" value="1"/>
</dbReference>
<comment type="function">
    <text evidence="1">Required for the synthesis of amylose in endosperm.</text>
</comment>
<comment type="catalytic activity">
    <reaction>
        <text>an NDP-alpha-D-glucose + [(1-&gt;4)-alpha-D-glucosyl](n) = [(1-&gt;4)-alpha-D-glucosyl](n+1) + a ribonucleoside 5'-diphosphate + H(+)</text>
        <dbReference type="Rhea" id="RHEA:15873"/>
        <dbReference type="Rhea" id="RHEA-COMP:9584"/>
        <dbReference type="Rhea" id="RHEA-COMP:9587"/>
        <dbReference type="ChEBI" id="CHEBI:15378"/>
        <dbReference type="ChEBI" id="CHEBI:15444"/>
        <dbReference type="ChEBI" id="CHEBI:57930"/>
        <dbReference type="ChEBI" id="CHEBI:76533"/>
        <dbReference type="EC" id="2.4.1.242"/>
    </reaction>
</comment>
<comment type="pathway">
    <text>Glycan biosynthesis; starch biosynthesis.</text>
</comment>
<comment type="subcellular location">
    <subcellularLocation>
        <location>Plastid</location>
        <location>Chloroplast</location>
    </subcellularLocation>
    <subcellularLocation>
        <location>Plastid</location>
        <location>Amyloplast</location>
    </subcellularLocation>
    <text evidence="1">Amyloplast or chloroplast, granule-bound.</text>
</comment>
<comment type="similarity">
    <text evidence="4">Belongs to the glycosyltransferase 1 family. Bacterial/plant glycogen synthase subfamily.</text>
</comment>
<reference key="1">
    <citation type="journal article" date="1994" name="Sci. China, Ser. B, Chem. Life Sci. Earth Sci.">
        <title>Identification of two transposon-like elements in rice Wx gene.</title>
        <authorList>
            <person name="Wang Z.Y."/>
            <person name="Zheng F.Q."/>
            <person name="Gao J.P."/>
            <person name="Wang X.Q."/>
            <person name="Wu M."/>
            <person name="Zhang J.L."/>
            <person name="Hong M.M."/>
        </authorList>
    </citation>
    <scope>NUCLEOTIDE SEQUENCE [GENOMIC DNA]</scope>
    <source>
        <strain>cv. Lf spontanea</strain>
    </source>
</reference>